<organism>
    <name type="scientific">Cupriavidus pinatubonensis (strain JMP 134 / LMG 1197)</name>
    <name type="common">Cupriavidus necator (strain JMP 134)</name>
    <dbReference type="NCBI Taxonomy" id="264198"/>
    <lineage>
        <taxon>Bacteria</taxon>
        <taxon>Pseudomonadati</taxon>
        <taxon>Pseudomonadota</taxon>
        <taxon>Betaproteobacteria</taxon>
        <taxon>Burkholderiales</taxon>
        <taxon>Burkholderiaceae</taxon>
        <taxon>Cupriavidus</taxon>
    </lineage>
</organism>
<gene>
    <name evidence="1" type="primary">nuoA</name>
    <name type="ordered locus">Reut_A0961</name>
</gene>
<reference key="1">
    <citation type="journal article" date="2010" name="PLoS ONE">
        <title>The complete multipartite genome sequence of Cupriavidus necator JMP134, a versatile pollutant degrader.</title>
        <authorList>
            <person name="Lykidis A."/>
            <person name="Perez-Pantoja D."/>
            <person name="Ledger T."/>
            <person name="Mavromatis K."/>
            <person name="Anderson I.J."/>
            <person name="Ivanova N.N."/>
            <person name="Hooper S.D."/>
            <person name="Lapidus A."/>
            <person name="Lucas S."/>
            <person name="Gonzalez B."/>
            <person name="Kyrpides N.C."/>
        </authorList>
    </citation>
    <scope>NUCLEOTIDE SEQUENCE [LARGE SCALE GENOMIC DNA]</scope>
    <source>
        <strain>JMP134 / LMG 1197</strain>
    </source>
</reference>
<feature type="chain" id="PRO_0000362751" description="NADH-quinone oxidoreductase subunit A">
    <location>
        <begin position="1"/>
        <end position="119"/>
    </location>
</feature>
<feature type="transmembrane region" description="Helical" evidence="1">
    <location>
        <begin position="7"/>
        <end position="27"/>
    </location>
</feature>
<feature type="transmembrane region" description="Helical" evidence="1">
    <location>
        <begin position="63"/>
        <end position="83"/>
    </location>
</feature>
<feature type="transmembrane region" description="Helical" evidence="1">
    <location>
        <begin position="88"/>
        <end position="108"/>
    </location>
</feature>
<proteinExistence type="inferred from homology"/>
<sequence>MTLEAYFPVLIFIIFGVVLGIALMSIGRILGPNKPDPAKLSPYECGFEAFEDARMKFDVRYYLIAILFILFDLETAFLFPWGVALREIGWPGFIAMGVFLLEFIVGFVYIWKKGALDWE</sequence>
<accession>Q473U3</accession>
<dbReference type="EC" id="7.1.1.-" evidence="1"/>
<dbReference type="EMBL" id="CP000090">
    <property type="protein sequence ID" value="AAZ60340.1"/>
    <property type="molecule type" value="Genomic_DNA"/>
</dbReference>
<dbReference type="SMR" id="Q473U3"/>
<dbReference type="STRING" id="264198.Reut_A0961"/>
<dbReference type="KEGG" id="reu:Reut_A0961"/>
<dbReference type="eggNOG" id="COG0838">
    <property type="taxonomic scope" value="Bacteria"/>
</dbReference>
<dbReference type="HOGENOM" id="CLU_119549_3_1_4"/>
<dbReference type="OrthoDB" id="9791970at2"/>
<dbReference type="GO" id="GO:0030964">
    <property type="term" value="C:NADH dehydrogenase complex"/>
    <property type="evidence" value="ECO:0007669"/>
    <property type="project" value="TreeGrafter"/>
</dbReference>
<dbReference type="GO" id="GO:0005886">
    <property type="term" value="C:plasma membrane"/>
    <property type="evidence" value="ECO:0007669"/>
    <property type="project" value="UniProtKB-SubCell"/>
</dbReference>
<dbReference type="GO" id="GO:0008137">
    <property type="term" value="F:NADH dehydrogenase (ubiquinone) activity"/>
    <property type="evidence" value="ECO:0007669"/>
    <property type="project" value="InterPro"/>
</dbReference>
<dbReference type="GO" id="GO:0050136">
    <property type="term" value="F:NADH:ubiquinone reductase (non-electrogenic) activity"/>
    <property type="evidence" value="ECO:0007669"/>
    <property type="project" value="UniProtKB-UniRule"/>
</dbReference>
<dbReference type="GO" id="GO:0048038">
    <property type="term" value="F:quinone binding"/>
    <property type="evidence" value="ECO:0007669"/>
    <property type="project" value="UniProtKB-KW"/>
</dbReference>
<dbReference type="FunFam" id="1.20.58.1610:FF:000004">
    <property type="entry name" value="NADH-quinone oxidoreductase subunit A"/>
    <property type="match status" value="1"/>
</dbReference>
<dbReference type="Gene3D" id="1.20.58.1610">
    <property type="entry name" value="NADH:ubiquinone/plastoquinone oxidoreductase, chain 3"/>
    <property type="match status" value="1"/>
</dbReference>
<dbReference type="HAMAP" id="MF_01394">
    <property type="entry name" value="NDH1_NuoA"/>
    <property type="match status" value="1"/>
</dbReference>
<dbReference type="InterPro" id="IPR023043">
    <property type="entry name" value="NAD(P)H_OxRDtase_bac/plastid"/>
</dbReference>
<dbReference type="InterPro" id="IPR000440">
    <property type="entry name" value="NADH_UbQ/plastoQ_OxRdtase_su3"/>
</dbReference>
<dbReference type="InterPro" id="IPR038430">
    <property type="entry name" value="NDAH_ubi_oxred_su3_sf"/>
</dbReference>
<dbReference type="PANTHER" id="PTHR11058">
    <property type="entry name" value="NADH-UBIQUINONE OXIDOREDUCTASE CHAIN 3"/>
    <property type="match status" value="1"/>
</dbReference>
<dbReference type="PANTHER" id="PTHR11058:SF9">
    <property type="entry name" value="NADH-UBIQUINONE OXIDOREDUCTASE CHAIN 3"/>
    <property type="match status" value="1"/>
</dbReference>
<dbReference type="Pfam" id="PF00507">
    <property type="entry name" value="Oxidored_q4"/>
    <property type="match status" value="1"/>
</dbReference>
<name>NUOA_CUPPJ</name>
<protein>
    <recommendedName>
        <fullName evidence="1">NADH-quinone oxidoreductase subunit A</fullName>
        <ecNumber evidence="1">7.1.1.-</ecNumber>
    </recommendedName>
    <alternativeName>
        <fullName evidence="1">NADH dehydrogenase I subunit A</fullName>
    </alternativeName>
    <alternativeName>
        <fullName evidence="1">NDH-1 subunit A</fullName>
    </alternativeName>
    <alternativeName>
        <fullName evidence="1">NUO1</fullName>
    </alternativeName>
</protein>
<keyword id="KW-0997">Cell inner membrane</keyword>
<keyword id="KW-1003">Cell membrane</keyword>
<keyword id="KW-0472">Membrane</keyword>
<keyword id="KW-0520">NAD</keyword>
<keyword id="KW-0874">Quinone</keyword>
<keyword id="KW-1278">Translocase</keyword>
<keyword id="KW-0812">Transmembrane</keyword>
<keyword id="KW-1133">Transmembrane helix</keyword>
<keyword id="KW-0813">Transport</keyword>
<keyword id="KW-0830">Ubiquinone</keyword>
<comment type="function">
    <text evidence="1">NDH-1 shuttles electrons from NADH, via FMN and iron-sulfur (Fe-S) centers, to quinones in the respiratory chain. The immediate electron acceptor for the enzyme in this species is believed to be ubiquinone. Couples the redox reaction to proton translocation (for every two electrons transferred, four hydrogen ions are translocated across the cytoplasmic membrane), and thus conserves the redox energy in a proton gradient.</text>
</comment>
<comment type="catalytic activity">
    <reaction evidence="1">
        <text>a quinone + NADH + 5 H(+)(in) = a quinol + NAD(+) + 4 H(+)(out)</text>
        <dbReference type="Rhea" id="RHEA:57888"/>
        <dbReference type="ChEBI" id="CHEBI:15378"/>
        <dbReference type="ChEBI" id="CHEBI:24646"/>
        <dbReference type="ChEBI" id="CHEBI:57540"/>
        <dbReference type="ChEBI" id="CHEBI:57945"/>
        <dbReference type="ChEBI" id="CHEBI:132124"/>
    </reaction>
</comment>
<comment type="subunit">
    <text evidence="1">NDH-1 is composed of 14 different subunits. Subunits NuoA, H, J, K, L, M, N constitute the membrane sector of the complex.</text>
</comment>
<comment type="subcellular location">
    <subcellularLocation>
        <location evidence="1">Cell inner membrane</location>
        <topology evidence="1">Multi-pass membrane protein</topology>
    </subcellularLocation>
</comment>
<comment type="similarity">
    <text evidence="1">Belongs to the complex I subunit 3 family.</text>
</comment>
<evidence type="ECO:0000255" key="1">
    <source>
        <dbReference type="HAMAP-Rule" id="MF_01394"/>
    </source>
</evidence>